<protein>
    <recommendedName>
        <fullName>Alpha-enolase</fullName>
        <ecNumber>4.2.1.11</ecNumber>
    </recommendedName>
    <alternativeName>
        <fullName>2-phospho-D-glycerate hydro-lyase</fullName>
    </alternativeName>
    <alternativeName>
        <fullName>Tau-crystallin</fullName>
    </alternativeName>
</protein>
<proteinExistence type="evidence at transcript level"/>
<accession>P19140</accession>
<evidence type="ECO:0000250" key="1"/>
<evidence type="ECO:0000305" key="2"/>
<sequence>MSILKIHAREIFDSRGNPTVEVDLYTNKGLFRAAVPSGASTGIYEALELRDNDKTRYMGKGVSKAVEHINKTIAPALISKNVNVVEQDKIDKLMLDMDGSENKSKFGANAILGVSLAVCKAGAAEKGVPLYRHIADLAGNPEVILPVPAFNVINGGSHAGNKLAMQEFMIPPCGADSFKEAMRIGAEVYHNLKNVIKEKYGKDATNVGDEGGFAPNILENKEALELLKTAIGKAGYSDKVVIGMDVAASEFYRDGKYDLDFKSPDDPSRYISPDQLADLYKGFVKNYPVVSIEDPFDQDDWGAWKKFTGSVGIQVVGDDLTVTNPKRIAKAVEEKACNCLLLKVNQIGSVTESLQACKLAQSNGWGVMVSHRSGETEDTFIADLVVGLCTGQIKTGAPCRSERLAKYNQLLRIEEELGSKARFAGRNFRNPRIN</sequence>
<gene>
    <name type="primary">ENO1</name>
</gene>
<name>ENOA_ANAPL</name>
<organism>
    <name type="scientific">Anas platyrhynchos</name>
    <name type="common">Mallard</name>
    <name type="synonym">Anas boschas</name>
    <dbReference type="NCBI Taxonomy" id="8839"/>
    <lineage>
        <taxon>Eukaryota</taxon>
        <taxon>Metazoa</taxon>
        <taxon>Chordata</taxon>
        <taxon>Craniata</taxon>
        <taxon>Vertebrata</taxon>
        <taxon>Euteleostomi</taxon>
        <taxon>Archelosauria</taxon>
        <taxon>Archosauria</taxon>
        <taxon>Dinosauria</taxon>
        <taxon>Saurischia</taxon>
        <taxon>Theropoda</taxon>
        <taxon>Coelurosauria</taxon>
        <taxon>Aves</taxon>
        <taxon>Neognathae</taxon>
        <taxon>Galloanserae</taxon>
        <taxon>Anseriformes</taxon>
        <taxon>Anatidae</taxon>
        <taxon>Anatinae</taxon>
        <taxon>Anas</taxon>
    </lineage>
</organism>
<feature type="initiator methionine" description="Removed" evidence="1">
    <location>
        <position position="1"/>
    </location>
</feature>
<feature type="chain" id="PRO_0000134100" description="Alpha-enolase">
    <location>
        <begin position="2"/>
        <end position="434"/>
    </location>
</feature>
<feature type="active site" description="Proton donor" evidence="1">
    <location>
        <position position="210"/>
    </location>
</feature>
<feature type="active site" description="Proton acceptor" evidence="1">
    <location>
        <position position="343"/>
    </location>
</feature>
<feature type="binding site" evidence="1">
    <location>
        <position position="40"/>
    </location>
    <ligand>
        <name>Mg(2+)</name>
        <dbReference type="ChEBI" id="CHEBI:18420"/>
        <label>1</label>
    </ligand>
</feature>
<feature type="binding site" evidence="1">
    <location>
        <position position="158"/>
    </location>
    <ligand>
        <name>substrate</name>
    </ligand>
</feature>
<feature type="binding site" evidence="1">
    <location>
        <position position="167"/>
    </location>
    <ligand>
        <name>substrate</name>
    </ligand>
</feature>
<feature type="binding site" evidence="1">
    <location>
        <position position="245"/>
    </location>
    <ligand>
        <name>Mg(2+)</name>
        <dbReference type="ChEBI" id="CHEBI:18420"/>
        <label>2</label>
    </ligand>
</feature>
<feature type="binding site" evidence="1">
    <location>
        <position position="293"/>
    </location>
    <ligand>
        <name>Mg(2+)</name>
        <dbReference type="ChEBI" id="CHEBI:18420"/>
        <label>2</label>
    </ligand>
</feature>
<feature type="binding site" evidence="1">
    <location>
        <position position="293"/>
    </location>
    <ligand>
        <name>substrate</name>
    </ligand>
</feature>
<feature type="binding site" evidence="1">
    <location>
        <position position="318"/>
    </location>
    <ligand>
        <name>Mg(2+)</name>
        <dbReference type="ChEBI" id="CHEBI:18420"/>
        <label>2</label>
    </ligand>
</feature>
<feature type="binding site" evidence="1">
    <location>
        <position position="318"/>
    </location>
    <ligand>
        <name>substrate</name>
    </ligand>
</feature>
<feature type="binding site" evidence="1">
    <location>
        <begin position="370"/>
        <end position="373"/>
    </location>
    <ligand>
        <name>substrate</name>
    </ligand>
</feature>
<feature type="binding site" evidence="1">
    <location>
        <position position="394"/>
    </location>
    <ligand>
        <name>substrate</name>
    </ligand>
</feature>
<reference key="1">
    <citation type="journal article" date="1988" name="J. Cell Biol.">
        <title>Tau-crystallin/alpha-enolase: one gene encodes both an enzyme and a lens structural protein.</title>
        <authorList>
            <person name="Wistow G.J."/>
            <person name="Lietman T."/>
            <person name="Williams L.A."/>
            <person name="Stapel S.O."/>
            <person name="de Jong W.W."/>
            <person name="Horwitz J."/>
            <person name="Piatigorsky J."/>
        </authorList>
    </citation>
    <scope>NUCLEOTIDE SEQUENCE [MRNA]</scope>
    <source>
        <tissue>Embryonic lens</tissue>
    </source>
</reference>
<comment type="function">
    <text>Both an enzyme and a lens structural protein.</text>
</comment>
<comment type="catalytic activity">
    <reaction>
        <text>(2R)-2-phosphoglycerate = phosphoenolpyruvate + H2O</text>
        <dbReference type="Rhea" id="RHEA:10164"/>
        <dbReference type="ChEBI" id="CHEBI:15377"/>
        <dbReference type="ChEBI" id="CHEBI:58289"/>
        <dbReference type="ChEBI" id="CHEBI:58702"/>
        <dbReference type="EC" id="4.2.1.11"/>
    </reaction>
</comment>
<comment type="cofactor">
    <cofactor>
        <name>Mg(2+)</name>
        <dbReference type="ChEBI" id="CHEBI:18420"/>
    </cofactor>
    <text>Binds two Mg(2+) per subunit. Required for catalysis and for stabilizing the dimer.</text>
</comment>
<comment type="pathway">
    <text>Carbohydrate degradation; glycolysis; pyruvate from D-glyceraldehyde 3-phosphate: step 4/5.</text>
</comment>
<comment type="subunit">
    <text>Homodimer.</text>
</comment>
<comment type="subcellular location">
    <subcellularLocation>
        <location>Cytoplasm</location>
    </subcellularLocation>
</comment>
<comment type="similarity">
    <text evidence="2">Belongs to the enolase family.</text>
</comment>
<dbReference type="EC" id="4.2.1.11"/>
<dbReference type="EMBL" id="M20749">
    <property type="protein sequence ID" value="AAA49218.1"/>
    <property type="molecule type" value="mRNA"/>
</dbReference>
<dbReference type="EMBL" id="X14195">
    <property type="protein sequence ID" value="CAA32409.1"/>
    <property type="molecule type" value="mRNA"/>
</dbReference>
<dbReference type="PIR" id="A32132">
    <property type="entry name" value="A32132"/>
</dbReference>
<dbReference type="RefSeq" id="NP_001297333.1">
    <property type="nucleotide sequence ID" value="NM_001310404.1"/>
</dbReference>
<dbReference type="SMR" id="P19140"/>
<dbReference type="GeneID" id="101793724"/>
<dbReference type="KEGG" id="apla:101793724"/>
<dbReference type="CTD" id="2023"/>
<dbReference type="OrthoDB" id="1739814at2759"/>
<dbReference type="UniPathway" id="UPA00109">
    <property type="reaction ID" value="UER00187"/>
</dbReference>
<dbReference type="Proteomes" id="UP000694400">
    <property type="component" value="Unplaced"/>
</dbReference>
<dbReference type="GO" id="GO:0000015">
    <property type="term" value="C:phosphopyruvate hydratase complex"/>
    <property type="evidence" value="ECO:0007669"/>
    <property type="project" value="InterPro"/>
</dbReference>
<dbReference type="GO" id="GO:0000287">
    <property type="term" value="F:magnesium ion binding"/>
    <property type="evidence" value="ECO:0007669"/>
    <property type="project" value="InterPro"/>
</dbReference>
<dbReference type="GO" id="GO:0004634">
    <property type="term" value="F:phosphopyruvate hydratase activity"/>
    <property type="evidence" value="ECO:0007669"/>
    <property type="project" value="UniProtKB-EC"/>
</dbReference>
<dbReference type="GO" id="GO:0005212">
    <property type="term" value="F:structural constituent of eye lens"/>
    <property type="evidence" value="ECO:0007669"/>
    <property type="project" value="UniProtKB-KW"/>
</dbReference>
<dbReference type="GO" id="GO:0006096">
    <property type="term" value="P:glycolytic process"/>
    <property type="evidence" value="ECO:0007669"/>
    <property type="project" value="UniProtKB-UniPathway"/>
</dbReference>
<dbReference type="CDD" id="cd03313">
    <property type="entry name" value="enolase"/>
    <property type="match status" value="1"/>
</dbReference>
<dbReference type="FunFam" id="3.30.390.10:FF:000001">
    <property type="entry name" value="Enolase"/>
    <property type="match status" value="1"/>
</dbReference>
<dbReference type="FunFam" id="3.20.20.120:FF:000002">
    <property type="entry name" value="Enolase 1"/>
    <property type="match status" value="1"/>
</dbReference>
<dbReference type="Gene3D" id="3.20.20.120">
    <property type="entry name" value="Enolase-like C-terminal domain"/>
    <property type="match status" value="1"/>
</dbReference>
<dbReference type="Gene3D" id="3.30.390.10">
    <property type="entry name" value="Enolase-like, N-terminal domain"/>
    <property type="match status" value="1"/>
</dbReference>
<dbReference type="HAMAP" id="MF_00318">
    <property type="entry name" value="Enolase"/>
    <property type="match status" value="1"/>
</dbReference>
<dbReference type="InterPro" id="IPR000941">
    <property type="entry name" value="Enolase"/>
</dbReference>
<dbReference type="InterPro" id="IPR036849">
    <property type="entry name" value="Enolase-like_C_sf"/>
</dbReference>
<dbReference type="InterPro" id="IPR029017">
    <property type="entry name" value="Enolase-like_N"/>
</dbReference>
<dbReference type="InterPro" id="IPR020810">
    <property type="entry name" value="Enolase_C"/>
</dbReference>
<dbReference type="InterPro" id="IPR020809">
    <property type="entry name" value="Enolase_CS"/>
</dbReference>
<dbReference type="InterPro" id="IPR020811">
    <property type="entry name" value="Enolase_N"/>
</dbReference>
<dbReference type="NCBIfam" id="TIGR01060">
    <property type="entry name" value="eno"/>
    <property type="match status" value="1"/>
</dbReference>
<dbReference type="PANTHER" id="PTHR11902:SF12">
    <property type="entry name" value="ALPHA-ENOLASE"/>
    <property type="match status" value="1"/>
</dbReference>
<dbReference type="PANTHER" id="PTHR11902">
    <property type="entry name" value="ENOLASE"/>
    <property type="match status" value="1"/>
</dbReference>
<dbReference type="Pfam" id="PF00113">
    <property type="entry name" value="Enolase_C"/>
    <property type="match status" value="1"/>
</dbReference>
<dbReference type="Pfam" id="PF03952">
    <property type="entry name" value="Enolase_N"/>
    <property type="match status" value="1"/>
</dbReference>
<dbReference type="PIRSF" id="PIRSF001400">
    <property type="entry name" value="Enolase"/>
    <property type="match status" value="1"/>
</dbReference>
<dbReference type="PRINTS" id="PR00148">
    <property type="entry name" value="ENOLASE"/>
</dbReference>
<dbReference type="SFLD" id="SFLDS00001">
    <property type="entry name" value="Enolase"/>
    <property type="match status" value="1"/>
</dbReference>
<dbReference type="SFLD" id="SFLDF00002">
    <property type="entry name" value="enolase"/>
    <property type="match status" value="1"/>
</dbReference>
<dbReference type="SMART" id="SM01192">
    <property type="entry name" value="Enolase_C"/>
    <property type="match status" value="1"/>
</dbReference>
<dbReference type="SMART" id="SM01193">
    <property type="entry name" value="Enolase_N"/>
    <property type="match status" value="1"/>
</dbReference>
<dbReference type="SUPFAM" id="SSF51604">
    <property type="entry name" value="Enolase C-terminal domain-like"/>
    <property type="match status" value="1"/>
</dbReference>
<dbReference type="SUPFAM" id="SSF54826">
    <property type="entry name" value="Enolase N-terminal domain-like"/>
    <property type="match status" value="1"/>
</dbReference>
<dbReference type="PROSITE" id="PS00164">
    <property type="entry name" value="ENOLASE"/>
    <property type="match status" value="1"/>
</dbReference>
<keyword id="KW-0963">Cytoplasm</keyword>
<keyword id="KW-0273">Eye lens protein</keyword>
<keyword id="KW-0324">Glycolysis</keyword>
<keyword id="KW-0456">Lyase</keyword>
<keyword id="KW-0460">Magnesium</keyword>
<keyword id="KW-0479">Metal-binding</keyword>